<feature type="chain" id="PRO_0000202207" description="Uncharacterized protein TP_0176">
    <location>
        <begin position="1"/>
        <end position="88"/>
    </location>
</feature>
<gene>
    <name type="ordered locus">TP_0176</name>
</gene>
<keyword id="KW-1185">Reference proteome</keyword>
<name>Y176_TREPA</name>
<sequence>MTNVFKKNIRALRMRYQDIALTLERTHSNGIYAGTLTAHTGENIPFFRNNRTLHSRYNPWIEAERTLPAQHASFFFVASGQVSTSVFS</sequence>
<dbReference type="EMBL" id="AE000520">
    <property type="protein sequence ID" value="AAC65166.1"/>
    <property type="molecule type" value="Genomic_DNA"/>
</dbReference>
<dbReference type="PIR" id="E71358">
    <property type="entry name" value="E71358"/>
</dbReference>
<dbReference type="RefSeq" id="WP_010881623.1">
    <property type="nucleotide sequence ID" value="NC_000919.1"/>
</dbReference>
<dbReference type="IntAct" id="O83206">
    <property type="interactions" value="1"/>
</dbReference>
<dbReference type="STRING" id="243276.TP_0176"/>
<dbReference type="EnsemblBacteria" id="AAC65166">
    <property type="protein sequence ID" value="AAC65166"/>
    <property type="gene ID" value="TP_0176"/>
</dbReference>
<dbReference type="KEGG" id="tpa:TP_0176"/>
<dbReference type="HOGENOM" id="CLU_2468121_0_0_12"/>
<dbReference type="Proteomes" id="UP000000811">
    <property type="component" value="Chromosome"/>
</dbReference>
<accession>O83206</accession>
<reference key="1">
    <citation type="journal article" date="1998" name="Science">
        <title>Complete genome sequence of Treponema pallidum, the syphilis spirochete.</title>
        <authorList>
            <person name="Fraser C.M."/>
            <person name="Norris S.J."/>
            <person name="Weinstock G.M."/>
            <person name="White O."/>
            <person name="Sutton G.G."/>
            <person name="Dodson R.J."/>
            <person name="Gwinn M.L."/>
            <person name="Hickey E.K."/>
            <person name="Clayton R.A."/>
            <person name="Ketchum K.A."/>
            <person name="Sodergren E."/>
            <person name="Hardham J.M."/>
            <person name="McLeod M.P."/>
            <person name="Salzberg S.L."/>
            <person name="Peterson J.D."/>
            <person name="Khalak H.G."/>
            <person name="Richardson D.L."/>
            <person name="Howell J.K."/>
            <person name="Chidambaram M."/>
            <person name="Utterback T.R."/>
            <person name="McDonald L.A."/>
            <person name="Artiach P."/>
            <person name="Bowman C."/>
            <person name="Cotton M.D."/>
            <person name="Fujii C."/>
            <person name="Garland S.A."/>
            <person name="Hatch B."/>
            <person name="Horst K."/>
            <person name="Roberts K.M."/>
            <person name="Sandusky M."/>
            <person name="Weidman J.F."/>
            <person name="Smith H.O."/>
            <person name="Venter J.C."/>
        </authorList>
    </citation>
    <scope>NUCLEOTIDE SEQUENCE [LARGE SCALE GENOMIC DNA]</scope>
    <source>
        <strain>Nichols</strain>
    </source>
</reference>
<organism>
    <name type="scientific">Treponema pallidum (strain Nichols)</name>
    <dbReference type="NCBI Taxonomy" id="243276"/>
    <lineage>
        <taxon>Bacteria</taxon>
        <taxon>Pseudomonadati</taxon>
        <taxon>Spirochaetota</taxon>
        <taxon>Spirochaetia</taxon>
        <taxon>Spirochaetales</taxon>
        <taxon>Treponemataceae</taxon>
        <taxon>Treponema</taxon>
    </lineage>
</organism>
<proteinExistence type="predicted"/>
<protein>
    <recommendedName>
        <fullName>Uncharacterized protein TP_0176</fullName>
    </recommendedName>
</protein>